<comment type="function">
    <text evidence="1">Heme-dependent dioxygenase that catalyzes the oxidative cleavage of the L-tryptophan (L-Trp) pyrrole ring and converts L-tryptophan to N-formyl-L-kynurenine. Catalyzes the oxidative cleavage of the indole moiety.</text>
</comment>
<comment type="catalytic activity">
    <reaction evidence="1">
        <text>L-tryptophan + O2 = N-formyl-L-kynurenine</text>
        <dbReference type="Rhea" id="RHEA:24536"/>
        <dbReference type="ChEBI" id="CHEBI:15379"/>
        <dbReference type="ChEBI" id="CHEBI:57912"/>
        <dbReference type="ChEBI" id="CHEBI:58629"/>
        <dbReference type="EC" id="1.13.11.11"/>
    </reaction>
</comment>
<comment type="cofactor">
    <cofactor evidence="1">
        <name>heme</name>
        <dbReference type="ChEBI" id="CHEBI:30413"/>
    </cofactor>
    <text evidence="1">Binds 1 heme group per subunit.</text>
</comment>
<comment type="pathway">
    <text evidence="1">Amino-acid degradation; L-tryptophan degradation via kynurenine pathway; L-kynurenine from L-tryptophan: step 1/2.</text>
</comment>
<comment type="subunit">
    <text evidence="1">Homotetramer.</text>
</comment>
<comment type="similarity">
    <text evidence="1">Belongs to the tryptophan 2,3-dioxygenase family.</text>
</comment>
<gene>
    <name evidence="1" type="primary">kynA</name>
    <name type="ordered locus">Krad_1864</name>
</gene>
<accession>A6W961</accession>
<dbReference type="EC" id="1.13.11.11" evidence="1"/>
<dbReference type="EMBL" id="CP000750">
    <property type="protein sequence ID" value="ABS03350.1"/>
    <property type="molecule type" value="Genomic_DNA"/>
</dbReference>
<dbReference type="RefSeq" id="WP_011981511.1">
    <property type="nucleotide sequence ID" value="NC_009664.2"/>
</dbReference>
<dbReference type="SMR" id="A6W961"/>
<dbReference type="STRING" id="266940.Krad_1864"/>
<dbReference type="KEGG" id="kra:Krad_1864"/>
<dbReference type="eggNOG" id="COG3483">
    <property type="taxonomic scope" value="Bacteria"/>
</dbReference>
<dbReference type="HOGENOM" id="CLU_063240_0_0_11"/>
<dbReference type="OrthoDB" id="9776847at2"/>
<dbReference type="UniPathway" id="UPA00333">
    <property type="reaction ID" value="UER00453"/>
</dbReference>
<dbReference type="Proteomes" id="UP000001116">
    <property type="component" value="Chromosome"/>
</dbReference>
<dbReference type="GO" id="GO:0020037">
    <property type="term" value="F:heme binding"/>
    <property type="evidence" value="ECO:0000250"/>
    <property type="project" value="UniProtKB"/>
</dbReference>
<dbReference type="GO" id="GO:0046872">
    <property type="term" value="F:metal ion binding"/>
    <property type="evidence" value="ECO:0007669"/>
    <property type="project" value="UniProtKB-KW"/>
</dbReference>
<dbReference type="GO" id="GO:0004833">
    <property type="term" value="F:tryptophan 2,3-dioxygenase activity"/>
    <property type="evidence" value="ECO:0000250"/>
    <property type="project" value="UniProtKB"/>
</dbReference>
<dbReference type="GO" id="GO:0019442">
    <property type="term" value="P:L-tryptophan catabolic process to acetyl-CoA"/>
    <property type="evidence" value="ECO:0007669"/>
    <property type="project" value="TreeGrafter"/>
</dbReference>
<dbReference type="GO" id="GO:0019441">
    <property type="term" value="P:L-tryptophan catabolic process to kynurenine"/>
    <property type="evidence" value="ECO:0000250"/>
    <property type="project" value="UniProtKB"/>
</dbReference>
<dbReference type="FunFam" id="1.20.58.480:FF:000001">
    <property type="entry name" value="Tryptophan 2,3-dioxygenase"/>
    <property type="match status" value="1"/>
</dbReference>
<dbReference type="Gene3D" id="1.20.58.480">
    <property type="match status" value="1"/>
</dbReference>
<dbReference type="HAMAP" id="MF_01972">
    <property type="entry name" value="T23O"/>
    <property type="match status" value="1"/>
</dbReference>
<dbReference type="InterPro" id="IPR037217">
    <property type="entry name" value="Trp/Indoleamine_2_3_dOase-like"/>
</dbReference>
<dbReference type="InterPro" id="IPR017485">
    <property type="entry name" value="Trp_2-3-dOase_bac"/>
</dbReference>
<dbReference type="InterPro" id="IPR004981">
    <property type="entry name" value="Trp_2_3_dOase"/>
</dbReference>
<dbReference type="NCBIfam" id="TIGR03036">
    <property type="entry name" value="trp_2_3_diox"/>
    <property type="match status" value="1"/>
</dbReference>
<dbReference type="PANTHER" id="PTHR10138">
    <property type="entry name" value="TRYPTOPHAN 2,3-DIOXYGENASE"/>
    <property type="match status" value="1"/>
</dbReference>
<dbReference type="PANTHER" id="PTHR10138:SF0">
    <property type="entry name" value="TRYPTOPHAN 2,3-DIOXYGENASE"/>
    <property type="match status" value="1"/>
</dbReference>
<dbReference type="Pfam" id="PF03301">
    <property type="entry name" value="Trp_dioxygenase"/>
    <property type="match status" value="2"/>
</dbReference>
<dbReference type="SUPFAM" id="SSF140959">
    <property type="entry name" value="Indolic compounds 2,3-dioxygenase-like"/>
    <property type="match status" value="1"/>
</dbReference>
<evidence type="ECO:0000255" key="1">
    <source>
        <dbReference type="HAMAP-Rule" id="MF_01972"/>
    </source>
</evidence>
<keyword id="KW-0223">Dioxygenase</keyword>
<keyword id="KW-0349">Heme</keyword>
<keyword id="KW-0408">Iron</keyword>
<keyword id="KW-0479">Metal-binding</keyword>
<keyword id="KW-0560">Oxidoreductase</keyword>
<keyword id="KW-1185">Reference proteome</keyword>
<keyword id="KW-0823">Tryptophan catabolism</keyword>
<organism>
    <name type="scientific">Kineococcus radiotolerans (strain ATCC BAA-149 / DSM 14245 / SRS30216)</name>
    <dbReference type="NCBI Taxonomy" id="266940"/>
    <lineage>
        <taxon>Bacteria</taxon>
        <taxon>Bacillati</taxon>
        <taxon>Actinomycetota</taxon>
        <taxon>Actinomycetes</taxon>
        <taxon>Kineosporiales</taxon>
        <taxon>Kineosporiaceae</taxon>
        <taxon>Kineococcus</taxon>
    </lineage>
</organism>
<sequence length="286" mass="32598">MSGTAEENTREVEAGVVTDFTREMSYGEYLHLDELLAAQHPLSTPEHHDELLFIVQHQTSELWLKLVLHELRSAMRAIAADDLKTALKNIARVKHIQRTLTEQWSVLATLTPTEYAQFRGFLANSSGFQSQQYRAVEFALGNKNAKMLDVFAHDGPGHAQLTELLEAPSLYDEFLRHLARRGHDVPAELLERDVTKAHVHTPALVATFRVIYEDAQRYWTEYEACEELVDLEENFQLWRFRHLKTVERTIGFKRGTGGSSGVGFLARALDLTFFPELYAVRTEIGS</sequence>
<protein>
    <recommendedName>
        <fullName evidence="1">Tryptophan 2,3-dioxygenase</fullName>
        <shortName evidence="1">TDO</shortName>
        <ecNumber evidence="1">1.13.11.11</ecNumber>
    </recommendedName>
    <alternativeName>
        <fullName evidence="1">Tryptamin 2,3-dioxygenase</fullName>
    </alternativeName>
    <alternativeName>
        <fullName evidence="1">Tryptophan oxygenase</fullName>
        <shortName evidence="1">TO</shortName>
        <shortName evidence="1">TRPO</shortName>
    </alternativeName>
    <alternativeName>
        <fullName evidence="1">Tryptophan pyrrolase</fullName>
    </alternativeName>
    <alternativeName>
        <fullName evidence="1">Tryptophanase</fullName>
    </alternativeName>
</protein>
<name>T23O_KINRD</name>
<reference key="1">
    <citation type="journal article" date="2008" name="PLoS ONE">
        <title>Survival in nuclear waste, extreme resistance, and potential applications gleaned from the genome sequence of Kineococcus radiotolerans SRS30216.</title>
        <authorList>
            <person name="Bagwell C.E."/>
            <person name="Bhat S."/>
            <person name="Hawkins G.M."/>
            <person name="Smith B.W."/>
            <person name="Biswas T."/>
            <person name="Hoover T.R."/>
            <person name="Saunders E."/>
            <person name="Han C.S."/>
            <person name="Tsodikov O.V."/>
            <person name="Shimkets L.J."/>
        </authorList>
    </citation>
    <scope>NUCLEOTIDE SEQUENCE [LARGE SCALE GENOMIC DNA]</scope>
    <source>
        <strain>ATCC BAA-149 / DSM 14245 / SRS30216</strain>
    </source>
</reference>
<feature type="chain" id="PRO_0000360118" description="Tryptophan 2,3-dioxygenase">
    <location>
        <begin position="1"/>
        <end position="286"/>
    </location>
</feature>
<feature type="binding site" evidence="1">
    <location>
        <begin position="53"/>
        <end position="57"/>
    </location>
    <ligand>
        <name>substrate</name>
    </ligand>
</feature>
<feature type="binding site" evidence="1">
    <location>
        <position position="115"/>
    </location>
    <ligand>
        <name>substrate</name>
    </ligand>
</feature>
<feature type="binding site" evidence="1">
    <location>
        <position position="119"/>
    </location>
    <ligand>
        <name>substrate</name>
    </ligand>
</feature>
<feature type="binding site" description="axial binding residue" evidence="1">
    <location>
        <position position="242"/>
    </location>
    <ligand>
        <name>heme</name>
        <dbReference type="ChEBI" id="CHEBI:30413"/>
    </ligand>
    <ligandPart>
        <name>Fe</name>
        <dbReference type="ChEBI" id="CHEBI:18248"/>
    </ligandPart>
</feature>
<feature type="binding site" evidence="1">
    <location>
        <position position="256"/>
    </location>
    <ligand>
        <name>substrate</name>
    </ligand>
</feature>
<proteinExistence type="inferred from homology"/>